<gene>
    <name evidence="1" type="primary">mnmG1</name>
    <name evidence="1" type="synonym">gidA1</name>
    <name type="ordered locus">FN0007</name>
</gene>
<feature type="chain" id="PRO_0000117103" description="tRNA uridine 5-carboxymethylaminomethyl modification enzyme MnmG 1">
    <location>
        <begin position="1"/>
        <end position="628"/>
    </location>
</feature>
<feature type="binding site" evidence="1">
    <location>
        <begin position="11"/>
        <end position="16"/>
    </location>
    <ligand>
        <name>FAD</name>
        <dbReference type="ChEBI" id="CHEBI:57692"/>
    </ligand>
</feature>
<feature type="binding site" evidence="1">
    <location>
        <begin position="280"/>
        <end position="294"/>
    </location>
    <ligand>
        <name>NAD(+)</name>
        <dbReference type="ChEBI" id="CHEBI:57540"/>
    </ligand>
</feature>
<evidence type="ECO:0000255" key="1">
    <source>
        <dbReference type="HAMAP-Rule" id="MF_00129"/>
    </source>
</evidence>
<comment type="function">
    <text evidence="1">NAD-binding protein involved in the addition of a carboxymethylaminomethyl (cmnm) group at the wobble position (U34) of certain tRNAs, forming tRNA-cmnm(5)s(2)U34.</text>
</comment>
<comment type="cofactor">
    <cofactor evidence="1">
        <name>FAD</name>
        <dbReference type="ChEBI" id="CHEBI:57692"/>
    </cofactor>
</comment>
<comment type="subunit">
    <text evidence="1">Homodimer. Heterotetramer of two MnmE and two MnmG subunits.</text>
</comment>
<comment type="subcellular location">
    <subcellularLocation>
        <location evidence="1">Cytoplasm</location>
    </subcellularLocation>
</comment>
<comment type="similarity">
    <text evidence="1">Belongs to the MnmG family.</text>
</comment>
<proteinExistence type="inferred from homology"/>
<sequence length="628" mass="71076">MNKDYDVIVVGAGHAGVEAALASARLGNKTALITLYLDTISMMSCNPSIGGPGKSNLVTEIDVLGGEMGRHIDEFNLQLKDLNTSKGPAARITRGQADKYKYRRKMREKLEKTENISLIQDCVEEILVEDIKDTQNSNYIKKITGIKTRLGIIYNAKVIVLATGTFLKGKIVIGDVSYSAGRQGETSAEKLSDSLRELGIKIERYQTATPPRLDKKTIDFSQLEELKGEEHPRYFSLFTKKEKNNTVPTWLTYTSDKTIEVIKEMMKFSPIVSGMVNTHGPRHCPSIDRKVLNFPDKEKHQIFLEMESENSDEIYVNGLTTAMPAFVQEKILKTIKGLENAKIMRYGYAVEYDYAPASQLYPSLENKKISGLFFAGQINGTSGYEEAAAQGFIAGVNAAKKIKGEKPVIIDRSEAYIGVLIDDLIHKKTPEPYRVLPSRAEYRLTLRYDNAFMRLFDKIKEVGIVDKDKIEFLEKSINDVYMEINNLKNISVSMNEANKFLESLDIEERFVKGVKASEILKIKDVSYDNLKVFLNLNDYEDFVKNQIETMIKYEIFIERENKQIEKFKKLEHMYIPENINYDEIKGISNIARAGLDEVRPLSIGEATRISGVTSNDITLIIAYMNIKL</sequence>
<keyword id="KW-0963">Cytoplasm</keyword>
<keyword id="KW-0274">FAD</keyword>
<keyword id="KW-0285">Flavoprotein</keyword>
<keyword id="KW-0520">NAD</keyword>
<keyword id="KW-1185">Reference proteome</keyword>
<keyword id="KW-0819">tRNA processing</keyword>
<accession>Q8RHA1</accession>
<name>MNMG1_FUSNN</name>
<reference key="1">
    <citation type="journal article" date="2002" name="J. Bacteriol.">
        <title>Genome sequence and analysis of the oral bacterium Fusobacterium nucleatum strain ATCC 25586.</title>
        <authorList>
            <person name="Kapatral V."/>
            <person name="Anderson I."/>
            <person name="Ivanova N."/>
            <person name="Reznik G."/>
            <person name="Los T."/>
            <person name="Lykidis A."/>
            <person name="Bhattacharyya A."/>
            <person name="Bartman A."/>
            <person name="Gardner W."/>
            <person name="Grechkin G."/>
            <person name="Zhu L."/>
            <person name="Vasieva O."/>
            <person name="Chu L."/>
            <person name="Kogan Y."/>
            <person name="Chaga O."/>
            <person name="Goltsman E."/>
            <person name="Bernal A."/>
            <person name="Larsen N."/>
            <person name="D'Souza M."/>
            <person name="Walunas T."/>
            <person name="Pusch G."/>
            <person name="Haselkorn R."/>
            <person name="Fonstein M."/>
            <person name="Kyrpides N.C."/>
            <person name="Overbeek R."/>
        </authorList>
    </citation>
    <scope>NUCLEOTIDE SEQUENCE [LARGE SCALE GENOMIC DNA]</scope>
    <source>
        <strain>ATCC 25586 / DSM 15643 / BCRC 10681 / CIP 101130 / JCM 8532 / KCTC 2640 / LMG 13131 / VPI 4355</strain>
    </source>
</reference>
<organism>
    <name type="scientific">Fusobacterium nucleatum subsp. nucleatum (strain ATCC 25586 / DSM 15643 / BCRC 10681 / CIP 101130 / JCM 8532 / KCTC 2640 / LMG 13131 / VPI 4355)</name>
    <dbReference type="NCBI Taxonomy" id="190304"/>
    <lineage>
        <taxon>Bacteria</taxon>
        <taxon>Fusobacteriati</taxon>
        <taxon>Fusobacteriota</taxon>
        <taxon>Fusobacteriia</taxon>
        <taxon>Fusobacteriales</taxon>
        <taxon>Fusobacteriaceae</taxon>
        <taxon>Fusobacterium</taxon>
    </lineage>
</organism>
<dbReference type="EMBL" id="AE009951">
    <property type="protein sequence ID" value="AAL94220.1"/>
    <property type="molecule type" value="Genomic_DNA"/>
</dbReference>
<dbReference type="RefSeq" id="NP_602921.1">
    <property type="nucleotide sequence ID" value="NC_003454.1"/>
</dbReference>
<dbReference type="RefSeq" id="WP_011016068.1">
    <property type="nucleotide sequence ID" value="NZ_CP028101.1"/>
</dbReference>
<dbReference type="SMR" id="Q8RHA1"/>
<dbReference type="STRING" id="190304.FN0007"/>
<dbReference type="PaxDb" id="190304-FN0007"/>
<dbReference type="EnsemblBacteria" id="AAL94220">
    <property type="protein sequence ID" value="AAL94220"/>
    <property type="gene ID" value="FN0007"/>
</dbReference>
<dbReference type="GeneID" id="79782860"/>
<dbReference type="KEGG" id="fnu:FN0007"/>
<dbReference type="PATRIC" id="fig|190304.8.peg.599"/>
<dbReference type="eggNOG" id="COG0445">
    <property type="taxonomic scope" value="Bacteria"/>
</dbReference>
<dbReference type="HOGENOM" id="CLU_007831_2_2_0"/>
<dbReference type="InParanoid" id="Q8RHA1"/>
<dbReference type="BioCyc" id="FNUC190304:G1FZS-621-MONOMER"/>
<dbReference type="Proteomes" id="UP000002521">
    <property type="component" value="Chromosome"/>
</dbReference>
<dbReference type="GO" id="GO:0005829">
    <property type="term" value="C:cytosol"/>
    <property type="evidence" value="ECO:0000318"/>
    <property type="project" value="GO_Central"/>
</dbReference>
<dbReference type="GO" id="GO:0050660">
    <property type="term" value="F:flavin adenine dinucleotide binding"/>
    <property type="evidence" value="ECO:0000318"/>
    <property type="project" value="GO_Central"/>
</dbReference>
<dbReference type="GO" id="GO:0030488">
    <property type="term" value="P:tRNA methylation"/>
    <property type="evidence" value="ECO:0000318"/>
    <property type="project" value="GO_Central"/>
</dbReference>
<dbReference type="GO" id="GO:0002098">
    <property type="term" value="P:tRNA wobble uridine modification"/>
    <property type="evidence" value="ECO:0000318"/>
    <property type="project" value="GO_Central"/>
</dbReference>
<dbReference type="FunFam" id="1.10.150.570:FF:000001">
    <property type="entry name" value="tRNA uridine 5-carboxymethylaminomethyl modification enzyme MnmG"/>
    <property type="match status" value="1"/>
</dbReference>
<dbReference type="FunFam" id="3.50.50.60:FF:000002">
    <property type="entry name" value="tRNA uridine 5-carboxymethylaminomethyl modification enzyme MnmG"/>
    <property type="match status" value="1"/>
</dbReference>
<dbReference type="FunFam" id="3.50.50.60:FF:001052">
    <property type="entry name" value="tRNA uridine 5-carboxymethylaminomethyl modification enzyme MnmG 1"/>
    <property type="match status" value="1"/>
</dbReference>
<dbReference type="Gene3D" id="3.50.50.60">
    <property type="entry name" value="FAD/NAD(P)-binding domain"/>
    <property type="match status" value="2"/>
</dbReference>
<dbReference type="Gene3D" id="1.10.150.570">
    <property type="entry name" value="GidA associated domain, C-terminal subdomain"/>
    <property type="match status" value="1"/>
</dbReference>
<dbReference type="Gene3D" id="1.10.10.1800">
    <property type="entry name" value="tRNA uridine 5-carboxymethylaminomethyl modification enzyme MnmG/GidA"/>
    <property type="match status" value="1"/>
</dbReference>
<dbReference type="HAMAP" id="MF_00129">
    <property type="entry name" value="MnmG_GidA"/>
    <property type="match status" value="1"/>
</dbReference>
<dbReference type="InterPro" id="IPR036188">
    <property type="entry name" value="FAD/NAD-bd_sf"/>
</dbReference>
<dbReference type="InterPro" id="IPR049312">
    <property type="entry name" value="GIDA_C_N"/>
</dbReference>
<dbReference type="InterPro" id="IPR004416">
    <property type="entry name" value="MnmG"/>
</dbReference>
<dbReference type="InterPro" id="IPR002218">
    <property type="entry name" value="MnmG-rel"/>
</dbReference>
<dbReference type="InterPro" id="IPR020595">
    <property type="entry name" value="MnmG-rel_CS"/>
</dbReference>
<dbReference type="InterPro" id="IPR026904">
    <property type="entry name" value="MnmG_C"/>
</dbReference>
<dbReference type="InterPro" id="IPR047001">
    <property type="entry name" value="MnmG_C_subdom"/>
</dbReference>
<dbReference type="InterPro" id="IPR044920">
    <property type="entry name" value="MnmG_C_subdom_sf"/>
</dbReference>
<dbReference type="InterPro" id="IPR040131">
    <property type="entry name" value="MnmG_N"/>
</dbReference>
<dbReference type="NCBIfam" id="TIGR00136">
    <property type="entry name" value="mnmG_gidA"/>
    <property type="match status" value="1"/>
</dbReference>
<dbReference type="PANTHER" id="PTHR11806">
    <property type="entry name" value="GLUCOSE INHIBITED DIVISION PROTEIN A"/>
    <property type="match status" value="1"/>
</dbReference>
<dbReference type="PANTHER" id="PTHR11806:SF0">
    <property type="entry name" value="PROTEIN MTO1 HOMOLOG, MITOCHONDRIAL"/>
    <property type="match status" value="1"/>
</dbReference>
<dbReference type="Pfam" id="PF01134">
    <property type="entry name" value="GIDA"/>
    <property type="match status" value="1"/>
</dbReference>
<dbReference type="Pfam" id="PF21680">
    <property type="entry name" value="GIDA_C_1st"/>
    <property type="match status" value="1"/>
</dbReference>
<dbReference type="Pfam" id="PF13932">
    <property type="entry name" value="SAM_GIDA_C"/>
    <property type="match status" value="1"/>
</dbReference>
<dbReference type="PRINTS" id="PR00368">
    <property type="entry name" value="FADPNR"/>
</dbReference>
<dbReference type="PRINTS" id="PR00411">
    <property type="entry name" value="PNDRDTASEI"/>
</dbReference>
<dbReference type="SMART" id="SM01228">
    <property type="entry name" value="GIDA_assoc_3"/>
    <property type="match status" value="1"/>
</dbReference>
<dbReference type="SUPFAM" id="SSF51905">
    <property type="entry name" value="FAD/NAD(P)-binding domain"/>
    <property type="match status" value="1"/>
</dbReference>
<dbReference type="PROSITE" id="PS01280">
    <property type="entry name" value="GIDA_1"/>
    <property type="match status" value="1"/>
</dbReference>
<dbReference type="PROSITE" id="PS01281">
    <property type="entry name" value="GIDA_2"/>
    <property type="match status" value="1"/>
</dbReference>
<protein>
    <recommendedName>
        <fullName evidence="1">tRNA uridine 5-carboxymethylaminomethyl modification enzyme MnmG 1</fullName>
    </recommendedName>
    <alternativeName>
        <fullName evidence="1">Glucose-inhibited division protein A 1</fullName>
    </alternativeName>
</protein>